<proteinExistence type="inferred from homology"/>
<keyword id="KW-0687">Ribonucleoprotein</keyword>
<keyword id="KW-0689">Ribosomal protein</keyword>
<gene>
    <name evidence="1" type="primary">rpmG3</name>
    <name type="ordered locus">SaurJH9_1609</name>
</gene>
<sequence length="49" mass="5873">MRVNVTLACTECGDRNYITTKNKRNNPERVEMKKFCSRENKQTLHRETK</sequence>
<name>RL333_STAA9</name>
<organism>
    <name type="scientific">Staphylococcus aureus (strain JH9)</name>
    <dbReference type="NCBI Taxonomy" id="359786"/>
    <lineage>
        <taxon>Bacteria</taxon>
        <taxon>Bacillati</taxon>
        <taxon>Bacillota</taxon>
        <taxon>Bacilli</taxon>
        <taxon>Bacillales</taxon>
        <taxon>Staphylococcaceae</taxon>
        <taxon>Staphylococcus</taxon>
    </lineage>
</organism>
<accession>A5IT79</accession>
<feature type="chain" id="PRO_0000356686" description="Large ribosomal subunit protein bL33C">
    <location>
        <begin position="1"/>
        <end position="49"/>
    </location>
</feature>
<protein>
    <recommendedName>
        <fullName evidence="1">Large ribosomal subunit protein bL33C</fullName>
    </recommendedName>
    <alternativeName>
        <fullName evidence="1">50S ribosomal protein L33 3</fullName>
    </alternativeName>
</protein>
<evidence type="ECO:0000255" key="1">
    <source>
        <dbReference type="HAMAP-Rule" id="MF_00294"/>
    </source>
</evidence>
<reference key="1">
    <citation type="submission" date="2007-05" db="EMBL/GenBank/DDBJ databases">
        <title>Complete sequence of chromosome of Staphylococcus aureus subsp. aureus JH9.</title>
        <authorList>
            <consortium name="US DOE Joint Genome Institute"/>
            <person name="Copeland A."/>
            <person name="Lucas S."/>
            <person name="Lapidus A."/>
            <person name="Barry K."/>
            <person name="Detter J.C."/>
            <person name="Glavina del Rio T."/>
            <person name="Hammon N."/>
            <person name="Israni S."/>
            <person name="Pitluck S."/>
            <person name="Chain P."/>
            <person name="Malfatti S."/>
            <person name="Shin M."/>
            <person name="Vergez L."/>
            <person name="Schmutz J."/>
            <person name="Larimer F."/>
            <person name="Land M."/>
            <person name="Hauser L."/>
            <person name="Kyrpides N."/>
            <person name="Kim E."/>
            <person name="Tomasz A."/>
            <person name="Richardson P."/>
        </authorList>
    </citation>
    <scope>NUCLEOTIDE SEQUENCE [LARGE SCALE GENOMIC DNA]</scope>
    <source>
        <strain>JH9</strain>
    </source>
</reference>
<dbReference type="EMBL" id="CP000703">
    <property type="protein sequence ID" value="ABQ49402.1"/>
    <property type="molecule type" value="Genomic_DNA"/>
</dbReference>
<dbReference type="SMR" id="A5IT79"/>
<dbReference type="KEGG" id="saj:SaurJH9_1609"/>
<dbReference type="HOGENOM" id="CLU_190949_0_2_9"/>
<dbReference type="GO" id="GO:0005737">
    <property type="term" value="C:cytoplasm"/>
    <property type="evidence" value="ECO:0007669"/>
    <property type="project" value="UniProtKB-ARBA"/>
</dbReference>
<dbReference type="GO" id="GO:1990904">
    <property type="term" value="C:ribonucleoprotein complex"/>
    <property type="evidence" value="ECO:0007669"/>
    <property type="project" value="UniProtKB-KW"/>
</dbReference>
<dbReference type="GO" id="GO:0005840">
    <property type="term" value="C:ribosome"/>
    <property type="evidence" value="ECO:0007669"/>
    <property type="project" value="UniProtKB-KW"/>
</dbReference>
<dbReference type="GO" id="GO:0003735">
    <property type="term" value="F:structural constituent of ribosome"/>
    <property type="evidence" value="ECO:0007669"/>
    <property type="project" value="InterPro"/>
</dbReference>
<dbReference type="GO" id="GO:0006412">
    <property type="term" value="P:translation"/>
    <property type="evidence" value="ECO:0007669"/>
    <property type="project" value="UniProtKB-UniRule"/>
</dbReference>
<dbReference type="Gene3D" id="2.20.28.120">
    <property type="entry name" value="Ribosomal protein L33"/>
    <property type="match status" value="1"/>
</dbReference>
<dbReference type="HAMAP" id="MF_00294">
    <property type="entry name" value="Ribosomal_bL33"/>
    <property type="match status" value="1"/>
</dbReference>
<dbReference type="InterPro" id="IPR001705">
    <property type="entry name" value="Ribosomal_bL33"/>
</dbReference>
<dbReference type="InterPro" id="IPR018264">
    <property type="entry name" value="Ribosomal_bL33_CS"/>
</dbReference>
<dbReference type="InterPro" id="IPR038584">
    <property type="entry name" value="Ribosomal_bL33_sf"/>
</dbReference>
<dbReference type="InterPro" id="IPR011332">
    <property type="entry name" value="Ribosomal_zn-bd"/>
</dbReference>
<dbReference type="NCBIfam" id="NF001764">
    <property type="entry name" value="PRK00504.1"/>
    <property type="match status" value="1"/>
</dbReference>
<dbReference type="NCBIfam" id="NF001860">
    <property type="entry name" value="PRK00595.1"/>
    <property type="match status" value="1"/>
</dbReference>
<dbReference type="NCBIfam" id="TIGR01023">
    <property type="entry name" value="rpmG_bact"/>
    <property type="match status" value="1"/>
</dbReference>
<dbReference type="PANTHER" id="PTHR43168">
    <property type="entry name" value="50S RIBOSOMAL PROTEIN L33, CHLOROPLASTIC"/>
    <property type="match status" value="1"/>
</dbReference>
<dbReference type="PANTHER" id="PTHR43168:SF2">
    <property type="entry name" value="LARGE RIBOSOMAL SUBUNIT PROTEIN BL33C"/>
    <property type="match status" value="1"/>
</dbReference>
<dbReference type="Pfam" id="PF00471">
    <property type="entry name" value="Ribosomal_L33"/>
    <property type="match status" value="1"/>
</dbReference>
<dbReference type="SUPFAM" id="SSF57829">
    <property type="entry name" value="Zn-binding ribosomal proteins"/>
    <property type="match status" value="1"/>
</dbReference>
<dbReference type="PROSITE" id="PS00582">
    <property type="entry name" value="RIBOSOMAL_L33"/>
    <property type="match status" value="1"/>
</dbReference>
<comment type="similarity">
    <text evidence="1">Belongs to the bacterial ribosomal protein bL33 family.</text>
</comment>